<feature type="chain" id="PRO_0000153098" description="Nitrogenase molybdenum-iron protein beta chain">
    <location>
        <begin position="1"/>
        <end position="511"/>
    </location>
</feature>
<feature type="binding site" evidence="1">
    <location>
        <position position="69"/>
    </location>
    <ligand>
        <name>[8Fe-7S] cluster</name>
        <dbReference type="ChEBI" id="CHEBI:21143"/>
        <note>ligand shared with alpha chain</note>
    </ligand>
</feature>
<feature type="binding site" evidence="1">
    <location>
        <position position="94"/>
    </location>
    <ligand>
        <name>[8Fe-7S] cluster</name>
        <dbReference type="ChEBI" id="CHEBI:21143"/>
        <note>ligand shared with alpha chain</note>
    </ligand>
</feature>
<feature type="binding site" evidence="1">
    <location>
        <position position="152"/>
    </location>
    <ligand>
        <name>[8Fe-7S] cluster</name>
        <dbReference type="ChEBI" id="CHEBI:21143"/>
        <note>ligand shared with alpha chain</note>
    </ligand>
</feature>
<feature type="binding site" evidence="1">
    <location>
        <position position="187"/>
    </location>
    <ligand>
        <name>[8Fe-7S] cluster</name>
        <dbReference type="ChEBI" id="CHEBI:21143"/>
        <note>ligand shared with alpha chain</note>
    </ligand>
</feature>
<reference key="1">
    <citation type="journal article" date="1999" name="Biochim. Biophys. Acta">
        <title>Analysis of the nifHDK operon and structure of the NifH protein from the unicellular, diazotrophic cyanobacterium, Cyanothece strain sp. ATCC 51142.</title>
        <authorList>
            <person name="Colon-Lopez M.S."/>
            <person name="Tang H.-Y."/>
            <person name="Tucker D.L."/>
            <person name="Sherman L.A."/>
        </authorList>
    </citation>
    <scope>NUCLEOTIDE SEQUENCE [GENOMIC DNA]</scope>
</reference>
<reference key="2">
    <citation type="journal article" date="2008" name="BMC Evol. Biol.">
        <title>The cyanobacterial endosymbiont of the unicellular algae Rhopalodia gibba shows reductive genome evolution.</title>
        <authorList>
            <person name="Kneip C."/>
            <person name="Voss C."/>
            <person name="Lockhart P.J."/>
            <person name="Maier U.G."/>
        </authorList>
    </citation>
    <scope>NUCLEOTIDE SEQUENCE [GENOMIC DNA]</scope>
</reference>
<reference key="3">
    <citation type="journal article" date="2008" name="Proc. Natl. Acad. Sci. U.S.A.">
        <title>The genome of Cyanothece 51142, a unicellular diazotrophic cyanobacterium important in the marine nitrogen cycle.</title>
        <authorList>
            <person name="Welsh E.A."/>
            <person name="Liberton M."/>
            <person name="Stoeckel J."/>
            <person name="Loh T."/>
            <person name="Elvitigala T."/>
            <person name="Wang C."/>
            <person name="Wollam A."/>
            <person name="Fulton R.S."/>
            <person name="Clifton S.W."/>
            <person name="Jacobs J.M."/>
            <person name="Aurora R."/>
            <person name="Ghosh B.K."/>
            <person name="Sherman L.A."/>
            <person name="Smith R.D."/>
            <person name="Wilson R.K."/>
            <person name="Pakrasi H.B."/>
        </authorList>
    </citation>
    <scope>NUCLEOTIDE SEQUENCE [LARGE SCALE GENOMIC DNA]</scope>
    <source>
        <strain>ATCC 51142 / BH68</strain>
    </source>
</reference>
<proteinExistence type="inferred from homology"/>
<keyword id="KW-0067">ATP-binding</keyword>
<keyword id="KW-0408">Iron</keyword>
<keyword id="KW-0411">Iron-sulfur</keyword>
<keyword id="KW-0479">Metal-binding</keyword>
<keyword id="KW-0535">Nitrogen fixation</keyword>
<keyword id="KW-0547">Nucleotide-binding</keyword>
<keyword id="KW-0560">Oxidoreductase</keyword>
<keyword id="KW-1185">Reference proteome</keyword>
<dbReference type="EC" id="1.18.6.1"/>
<dbReference type="EMBL" id="AF003338">
    <property type="protein sequence ID" value="AAB61284.1"/>
    <property type="molecule type" value="Genomic_DNA"/>
</dbReference>
<dbReference type="EMBL" id="AY728386">
    <property type="protein sequence ID" value="AAW56990.1"/>
    <property type="molecule type" value="Genomic_DNA"/>
</dbReference>
<dbReference type="EMBL" id="CP000806">
    <property type="protein sequence ID" value="ACB49912.1"/>
    <property type="molecule type" value="Genomic_DNA"/>
</dbReference>
<dbReference type="RefSeq" id="WP_009546641.1">
    <property type="nucleotide sequence ID" value="NC_010546.1"/>
</dbReference>
<dbReference type="SMR" id="O07643"/>
<dbReference type="STRING" id="43989.cce_0561"/>
<dbReference type="KEGG" id="cyt:cce_0561"/>
<dbReference type="eggNOG" id="COG2710">
    <property type="taxonomic scope" value="Bacteria"/>
</dbReference>
<dbReference type="HOGENOM" id="CLU_025876_2_0_3"/>
<dbReference type="OrthoDB" id="9800746at2"/>
<dbReference type="Proteomes" id="UP000001203">
    <property type="component" value="Chromosome circular"/>
</dbReference>
<dbReference type="GO" id="GO:0016612">
    <property type="term" value="C:molybdenum-iron nitrogenase complex"/>
    <property type="evidence" value="ECO:0007669"/>
    <property type="project" value="InterPro"/>
</dbReference>
<dbReference type="GO" id="GO:0005524">
    <property type="term" value="F:ATP binding"/>
    <property type="evidence" value="ECO:0007669"/>
    <property type="project" value="UniProtKB-KW"/>
</dbReference>
<dbReference type="GO" id="GO:0051536">
    <property type="term" value="F:iron-sulfur cluster binding"/>
    <property type="evidence" value="ECO:0007669"/>
    <property type="project" value="UniProtKB-KW"/>
</dbReference>
<dbReference type="GO" id="GO:0046872">
    <property type="term" value="F:metal ion binding"/>
    <property type="evidence" value="ECO:0007669"/>
    <property type="project" value="UniProtKB-KW"/>
</dbReference>
<dbReference type="GO" id="GO:0016163">
    <property type="term" value="F:nitrogenase activity"/>
    <property type="evidence" value="ECO:0007669"/>
    <property type="project" value="UniProtKB-EC"/>
</dbReference>
<dbReference type="GO" id="GO:0009399">
    <property type="term" value="P:nitrogen fixation"/>
    <property type="evidence" value="ECO:0007669"/>
    <property type="project" value="UniProtKB-KW"/>
</dbReference>
<dbReference type="CDD" id="cd01974">
    <property type="entry name" value="Nitrogenase_MoFe_beta"/>
    <property type="match status" value="1"/>
</dbReference>
<dbReference type="Gene3D" id="3.40.50.1980">
    <property type="entry name" value="Nitrogenase molybdenum iron protein domain"/>
    <property type="match status" value="3"/>
</dbReference>
<dbReference type="Gene3D" id="1.20.89.10">
    <property type="entry name" value="Nitrogenase Molybdenum-iron Protein, subunit B, domain 4"/>
    <property type="match status" value="1"/>
</dbReference>
<dbReference type="InterPro" id="IPR050152">
    <property type="entry name" value="ChlB/BchB/BchZ"/>
</dbReference>
<dbReference type="InterPro" id="IPR000510">
    <property type="entry name" value="Nase/OxRdtase_comp1"/>
</dbReference>
<dbReference type="InterPro" id="IPR000318">
    <property type="entry name" value="Nase_comp1_CS"/>
</dbReference>
<dbReference type="InterPro" id="IPR005976">
    <property type="entry name" value="Nase_Mo-Fe_CF_bsu"/>
</dbReference>
<dbReference type="InterPro" id="IPR024564">
    <property type="entry name" value="Nase_Mo-Fe_CF_bsu_N"/>
</dbReference>
<dbReference type="NCBIfam" id="TIGR01286">
    <property type="entry name" value="nifK"/>
    <property type="match status" value="1"/>
</dbReference>
<dbReference type="PANTHER" id="PTHR33712">
    <property type="entry name" value="LIGHT-INDEPENDENT PROTOCHLOROPHYLLIDE REDUCTASE SUBUNIT B"/>
    <property type="match status" value="1"/>
</dbReference>
<dbReference type="PANTHER" id="PTHR33712:SF7">
    <property type="entry name" value="LIGHT-INDEPENDENT PROTOCHLOROPHYLLIDE REDUCTASE SUBUNIT B"/>
    <property type="match status" value="1"/>
</dbReference>
<dbReference type="Pfam" id="PF11844">
    <property type="entry name" value="DUF3364"/>
    <property type="match status" value="1"/>
</dbReference>
<dbReference type="Pfam" id="PF00148">
    <property type="entry name" value="Oxidored_nitro"/>
    <property type="match status" value="1"/>
</dbReference>
<dbReference type="SUPFAM" id="SSF53807">
    <property type="entry name" value="Helical backbone' metal receptor"/>
    <property type="match status" value="1"/>
</dbReference>
<dbReference type="PROSITE" id="PS00699">
    <property type="entry name" value="NITROGENASE_1_1"/>
    <property type="match status" value="1"/>
</dbReference>
<dbReference type="PROSITE" id="PS00090">
    <property type="entry name" value="NITROGENASE_1_2"/>
    <property type="match status" value="1"/>
</dbReference>
<accession>O07643</accession>
<accession>A1KYD7</accession>
<protein>
    <recommendedName>
        <fullName>Nitrogenase molybdenum-iron protein beta chain</fullName>
        <ecNumber>1.18.6.1</ecNumber>
    </recommendedName>
    <alternativeName>
        <fullName>Dinitrogenase</fullName>
    </alternativeName>
    <alternativeName>
        <fullName>Nitrogenase component I</fullName>
    </alternativeName>
</protein>
<name>NIFK_CROS5</name>
<comment type="function">
    <text>This molybdenum-iron protein is part of the nitrogenase complex that catalyzes the key enzymatic reactions in nitrogen fixation.</text>
</comment>
<comment type="catalytic activity">
    <reaction>
        <text>N2 + 8 reduced [2Fe-2S]-[ferredoxin] + 16 ATP + 16 H2O = H2 + 8 oxidized [2Fe-2S]-[ferredoxin] + 2 NH4(+) + 16 ADP + 16 phosphate + 6 H(+)</text>
        <dbReference type="Rhea" id="RHEA:21448"/>
        <dbReference type="Rhea" id="RHEA-COMP:10000"/>
        <dbReference type="Rhea" id="RHEA-COMP:10001"/>
        <dbReference type="ChEBI" id="CHEBI:15377"/>
        <dbReference type="ChEBI" id="CHEBI:15378"/>
        <dbReference type="ChEBI" id="CHEBI:17997"/>
        <dbReference type="ChEBI" id="CHEBI:18276"/>
        <dbReference type="ChEBI" id="CHEBI:28938"/>
        <dbReference type="ChEBI" id="CHEBI:30616"/>
        <dbReference type="ChEBI" id="CHEBI:33737"/>
        <dbReference type="ChEBI" id="CHEBI:33738"/>
        <dbReference type="ChEBI" id="CHEBI:43474"/>
        <dbReference type="ChEBI" id="CHEBI:456216"/>
        <dbReference type="EC" id="1.18.6.1"/>
    </reaction>
</comment>
<comment type="cofactor">
    <cofactor evidence="1">
        <name>[8Fe-7S] cluster</name>
        <dbReference type="ChEBI" id="CHEBI:21143"/>
    </cofactor>
    <text evidence="1">Binds 1 [8Fe-7S] cluster per heterodimer.</text>
</comment>
<comment type="subunit">
    <text>Tetramer of two alpha and two beta chains. Forms complex with the iron protein (nitrogenase component 2).</text>
</comment>
<comment type="similarity">
    <text evidence="2">Belongs to the NifD/NifK/NifE/NifN family.</text>
</comment>
<evidence type="ECO:0000250" key="1"/>
<evidence type="ECO:0000305" key="2"/>
<sequence length="511" mass="57114">MAQNVNNIKDHVDLFHQPEYQELFENKKQFEGMPTAEKVQEVAEWTKSWEYREKNFAREALTVNPAKACQPLGALLAAIGFEGTLPFVHGSQGCVAYFRTHLTRHFKEPVSAVSSSMTENAAVFGGLKNMVDGLQNSYALYKPKMIAVCTTCMAEVIGDDLGAFLGNARQDGVIPDDLPVPFAHTPSFVGSHITGYDSMMKSILSTLTEGKKKETTNGKINFIAGFETYIGNVRAIKNIISAFDLEGTLLSDTEMYLDSPNLGEFKMYHEGTSLEDAADSINAEATVTLQTYTTPKTREYIEKKWGQKTYTYRPWGVKGTDEFLMGLSELTGKPIPKEFEIARGRAVDAMTDTQAWVHGKRAAVYGDPDLVMGLLQFMLEMGIEPVHVLVNNSTKEFEEEAKALLAASPYGQQATVWGGKDLWHMRSLLFTEPVDFLVGNSYAKYLQRDTKTPLIRIGYPIFDRHHLHRYSTIGYEGAINLLNWIANGLMDELDRKTDTPSVTDISFDLVR</sequence>
<organism>
    <name type="scientific">Crocosphaera subtropica (strain ATCC 51142 / BH68)</name>
    <name type="common">Cyanothece sp. (strain ATCC 51142)</name>
    <dbReference type="NCBI Taxonomy" id="43989"/>
    <lineage>
        <taxon>Bacteria</taxon>
        <taxon>Bacillati</taxon>
        <taxon>Cyanobacteriota</taxon>
        <taxon>Cyanophyceae</taxon>
        <taxon>Oscillatoriophycideae</taxon>
        <taxon>Chroococcales</taxon>
        <taxon>Aphanothecaceae</taxon>
        <taxon>Crocosphaera</taxon>
        <taxon>Crocosphaera subtropica</taxon>
    </lineage>
</organism>
<gene>
    <name type="primary">nifK</name>
    <name type="ordered locus">cce_0561</name>
</gene>